<sequence>MTATATLGGGCFWCVEAAFEELDGVESVTSGYAGGHTEDPTYREVCSGNTGHAEVVQVAYDSDVLAYEDLLEVFFTVHDPTQLNRQGPDVGSQYRSIVLYHDDTQRELAEAYIESLDEAGEYDDDIVTEIERLETFYRAEENHQNYFEKNPQDAYCRMHAQPKIETVREAFAEKVDSR</sequence>
<gene>
    <name evidence="1" type="primary">msrA</name>
    <name type="ordered locus">NP_0038A</name>
</gene>
<comment type="function">
    <text evidence="1">Has an important function as a repair enzyme for proteins that have been inactivated by oxidation. Catalyzes the reversible oxidation-reduction of methionine sulfoxide in proteins to methionine.</text>
</comment>
<comment type="catalytic activity">
    <reaction evidence="1">
        <text>L-methionyl-[protein] + [thioredoxin]-disulfide + H2O = L-methionyl-(S)-S-oxide-[protein] + [thioredoxin]-dithiol</text>
        <dbReference type="Rhea" id="RHEA:14217"/>
        <dbReference type="Rhea" id="RHEA-COMP:10698"/>
        <dbReference type="Rhea" id="RHEA-COMP:10700"/>
        <dbReference type="Rhea" id="RHEA-COMP:12313"/>
        <dbReference type="Rhea" id="RHEA-COMP:12315"/>
        <dbReference type="ChEBI" id="CHEBI:15377"/>
        <dbReference type="ChEBI" id="CHEBI:16044"/>
        <dbReference type="ChEBI" id="CHEBI:29950"/>
        <dbReference type="ChEBI" id="CHEBI:44120"/>
        <dbReference type="ChEBI" id="CHEBI:50058"/>
        <dbReference type="EC" id="1.8.4.11"/>
    </reaction>
</comment>
<comment type="catalytic activity">
    <reaction evidence="1">
        <text>[thioredoxin]-disulfide + L-methionine + H2O = L-methionine (S)-S-oxide + [thioredoxin]-dithiol</text>
        <dbReference type="Rhea" id="RHEA:19993"/>
        <dbReference type="Rhea" id="RHEA-COMP:10698"/>
        <dbReference type="Rhea" id="RHEA-COMP:10700"/>
        <dbReference type="ChEBI" id="CHEBI:15377"/>
        <dbReference type="ChEBI" id="CHEBI:29950"/>
        <dbReference type="ChEBI" id="CHEBI:50058"/>
        <dbReference type="ChEBI" id="CHEBI:57844"/>
        <dbReference type="ChEBI" id="CHEBI:58772"/>
        <dbReference type="EC" id="1.8.4.11"/>
    </reaction>
</comment>
<comment type="similarity">
    <text evidence="1">Belongs to the MsrA Met sulfoxide reductase family.</text>
</comment>
<evidence type="ECO:0000255" key="1">
    <source>
        <dbReference type="HAMAP-Rule" id="MF_01401"/>
    </source>
</evidence>
<dbReference type="EC" id="1.8.4.11" evidence="1"/>
<dbReference type="EMBL" id="CR936257">
    <property type="protein sequence ID" value="CAI48110.1"/>
    <property type="molecule type" value="Genomic_DNA"/>
</dbReference>
<dbReference type="RefSeq" id="WP_011321749.1">
    <property type="nucleotide sequence ID" value="NC_007426.1"/>
</dbReference>
<dbReference type="SMR" id="Q3IUS0"/>
<dbReference type="STRING" id="348780.NP_0038A"/>
<dbReference type="EnsemblBacteria" id="CAI48110">
    <property type="protein sequence ID" value="CAI48110"/>
    <property type="gene ID" value="NP_0038A"/>
</dbReference>
<dbReference type="GeneID" id="3702945"/>
<dbReference type="KEGG" id="nph:NP_0038A"/>
<dbReference type="eggNOG" id="arCOG02816">
    <property type="taxonomic scope" value="Archaea"/>
</dbReference>
<dbReference type="HOGENOM" id="CLU_031040_10_0_2"/>
<dbReference type="OrthoDB" id="7150at2157"/>
<dbReference type="Proteomes" id="UP000002698">
    <property type="component" value="Chromosome"/>
</dbReference>
<dbReference type="GO" id="GO:0033744">
    <property type="term" value="F:L-methionine:thioredoxin-disulfide S-oxidoreductase activity"/>
    <property type="evidence" value="ECO:0007669"/>
    <property type="project" value="RHEA"/>
</dbReference>
<dbReference type="GO" id="GO:0008113">
    <property type="term" value="F:peptide-methionine (S)-S-oxide reductase activity"/>
    <property type="evidence" value="ECO:0007669"/>
    <property type="project" value="UniProtKB-UniRule"/>
</dbReference>
<dbReference type="GO" id="GO:0036211">
    <property type="term" value="P:protein modification process"/>
    <property type="evidence" value="ECO:0007669"/>
    <property type="project" value="UniProtKB-UniRule"/>
</dbReference>
<dbReference type="Gene3D" id="3.30.1060.10">
    <property type="entry name" value="Peptide methionine sulphoxide reductase MsrA"/>
    <property type="match status" value="1"/>
</dbReference>
<dbReference type="HAMAP" id="MF_01401">
    <property type="entry name" value="MsrA"/>
    <property type="match status" value="1"/>
</dbReference>
<dbReference type="InterPro" id="IPR002569">
    <property type="entry name" value="Met_Sox_Rdtase_MsrA_dom"/>
</dbReference>
<dbReference type="InterPro" id="IPR036509">
    <property type="entry name" value="Met_Sox_Rdtase_MsrA_sf"/>
</dbReference>
<dbReference type="NCBIfam" id="TIGR00401">
    <property type="entry name" value="msrA"/>
    <property type="match status" value="1"/>
</dbReference>
<dbReference type="PANTHER" id="PTHR43774">
    <property type="entry name" value="PEPTIDE METHIONINE SULFOXIDE REDUCTASE"/>
    <property type="match status" value="1"/>
</dbReference>
<dbReference type="PANTHER" id="PTHR43774:SF1">
    <property type="entry name" value="PEPTIDE METHIONINE SULFOXIDE REDUCTASE MSRA 2"/>
    <property type="match status" value="1"/>
</dbReference>
<dbReference type="Pfam" id="PF01625">
    <property type="entry name" value="PMSR"/>
    <property type="match status" value="1"/>
</dbReference>
<dbReference type="SUPFAM" id="SSF55068">
    <property type="entry name" value="Peptide methionine sulfoxide reductase"/>
    <property type="match status" value="1"/>
</dbReference>
<keyword id="KW-0560">Oxidoreductase</keyword>
<keyword id="KW-1185">Reference proteome</keyword>
<organism>
    <name type="scientific">Natronomonas pharaonis (strain ATCC 35678 / DSM 2160 / CIP 103997 / JCM 8858 / NBRC 14720 / NCIMB 2260 / Gabara)</name>
    <name type="common">Halobacterium pharaonis</name>
    <dbReference type="NCBI Taxonomy" id="348780"/>
    <lineage>
        <taxon>Archaea</taxon>
        <taxon>Methanobacteriati</taxon>
        <taxon>Methanobacteriota</taxon>
        <taxon>Stenosarchaea group</taxon>
        <taxon>Halobacteria</taxon>
        <taxon>Halobacteriales</taxon>
        <taxon>Haloarculaceae</taxon>
        <taxon>Natronomonas</taxon>
    </lineage>
</organism>
<proteinExistence type="inferred from homology"/>
<reference key="1">
    <citation type="journal article" date="2005" name="Genome Res.">
        <title>Living with two extremes: conclusions from the genome sequence of Natronomonas pharaonis.</title>
        <authorList>
            <person name="Falb M."/>
            <person name="Pfeiffer F."/>
            <person name="Palm P."/>
            <person name="Rodewald K."/>
            <person name="Hickmann V."/>
            <person name="Tittor J."/>
            <person name="Oesterhelt D."/>
        </authorList>
    </citation>
    <scope>NUCLEOTIDE SEQUENCE [LARGE SCALE GENOMIC DNA]</scope>
    <source>
        <strain>ATCC 35678 / DSM 2160 / CIP 103997 / JCM 8858 / NBRC 14720 / NCIMB 2260 / Gabara</strain>
    </source>
</reference>
<name>MSRA_NATPD</name>
<feature type="chain" id="PRO_1000145423" description="Peptide methionine sulfoxide reductase MsrA">
    <location>
        <begin position="1"/>
        <end position="178"/>
    </location>
</feature>
<feature type="active site" evidence="1">
    <location>
        <position position="11"/>
    </location>
</feature>
<accession>Q3IUS0</accession>
<protein>
    <recommendedName>
        <fullName evidence="1">Peptide methionine sulfoxide reductase MsrA</fullName>
        <shortName evidence="1">Protein-methionine-S-oxide reductase</shortName>
        <ecNumber evidence="1">1.8.4.11</ecNumber>
    </recommendedName>
    <alternativeName>
        <fullName evidence="1">Peptide-methionine (S)-S-oxide reductase</fullName>
        <shortName evidence="1">Peptide Met(O) reductase</shortName>
    </alternativeName>
</protein>